<reference evidence="10" key="1">
    <citation type="submission" date="2003-12" db="EMBL/GenBank/DDBJ databases">
        <authorList>
            <consortium name="NIH - Xenopus Gene Collection (XGC) project"/>
        </authorList>
    </citation>
    <scope>NUCLEOTIDE SEQUENCE [LARGE SCALE MRNA]</scope>
    <source>
        <tissue evidence="10">Embryo</tissue>
    </source>
</reference>
<proteinExistence type="evidence at transcript level"/>
<organism>
    <name type="scientific">Xenopus tropicalis</name>
    <name type="common">Western clawed frog</name>
    <name type="synonym">Silurana tropicalis</name>
    <dbReference type="NCBI Taxonomy" id="8364"/>
    <lineage>
        <taxon>Eukaryota</taxon>
        <taxon>Metazoa</taxon>
        <taxon>Chordata</taxon>
        <taxon>Craniata</taxon>
        <taxon>Vertebrata</taxon>
        <taxon>Euteleostomi</taxon>
        <taxon>Amphibia</taxon>
        <taxon>Batrachia</taxon>
        <taxon>Anura</taxon>
        <taxon>Pipoidea</taxon>
        <taxon>Pipidae</taxon>
        <taxon>Xenopodinae</taxon>
        <taxon>Xenopus</taxon>
        <taxon>Silurana</taxon>
    </lineage>
</organism>
<feature type="chain" id="PRO_0000223526" description="Insulin receptor substrate 1" evidence="9">
    <location>
        <begin position="1"/>
        <end position="654"/>
    </location>
</feature>
<feature type="domain" description="PH" evidence="6">
    <location>
        <begin position="3"/>
        <end position="107"/>
    </location>
</feature>
<feature type="domain" description="IRS-type PTB" evidence="7">
    <location>
        <begin position="126"/>
        <end position="230"/>
    </location>
</feature>
<feature type="region of interest" description="Disordered" evidence="8">
    <location>
        <begin position="228"/>
        <end position="329"/>
    </location>
</feature>
<feature type="region of interest" description="Disordered" evidence="8">
    <location>
        <begin position="473"/>
        <end position="494"/>
    </location>
</feature>
<feature type="region of interest" description="Disordered" evidence="8">
    <location>
        <begin position="507"/>
        <end position="532"/>
    </location>
</feature>
<feature type="short sequence motif" description="YXXM motif 1" evidence="5">
    <location>
        <begin position="345"/>
        <end position="348"/>
    </location>
</feature>
<feature type="short sequence motif" description="YXXM motif 2" evidence="5">
    <location>
        <begin position="384"/>
        <end position="387"/>
    </location>
</feature>
<feature type="short sequence motif" description="YXXM motif 3" evidence="5">
    <location>
        <begin position="398"/>
        <end position="401"/>
    </location>
</feature>
<feature type="short sequence motif" description="YXXM motif 4" evidence="5">
    <location>
        <begin position="411"/>
        <end position="414"/>
    </location>
</feature>
<feature type="short sequence motif" description="YXXM motif 5" evidence="5">
    <location>
        <begin position="430"/>
        <end position="433"/>
    </location>
</feature>
<feature type="short sequence motif" description="YXXM motif 6" evidence="5">
    <location>
        <begin position="466"/>
        <end position="469"/>
    </location>
</feature>
<feature type="compositionally biased region" description="Polar residues" evidence="8">
    <location>
        <begin position="235"/>
        <end position="245"/>
    </location>
</feature>
<feature type="compositionally biased region" description="Polar residues" evidence="8">
    <location>
        <begin position="307"/>
        <end position="321"/>
    </location>
</feature>
<feature type="compositionally biased region" description="Low complexity" evidence="8">
    <location>
        <begin position="514"/>
        <end position="524"/>
    </location>
</feature>
<feature type="modified residue" description="Phosphotyrosine" evidence="2">
    <location>
        <position position="36"/>
    </location>
</feature>
<feature type="modified residue" description="Phosphoserine" evidence="3">
    <location>
        <position position="276"/>
    </location>
</feature>
<feature type="modified residue" description="Phosphotyrosine; by INSR" evidence="1">
    <location>
        <position position="345"/>
    </location>
</feature>
<feature type="modified residue" description="Phosphotyrosine; by INSR" evidence="1">
    <location>
        <position position="398"/>
    </location>
</feature>
<feature type="modified residue" description="Phosphotyrosine; by INSR" evidence="1">
    <location>
        <position position="411"/>
    </location>
</feature>
<feature type="modified residue" description="Phosphotyrosine" evidence="2">
    <location>
        <position position="430"/>
    </location>
</feature>
<feature type="modified residue" description="Phosphotyrosine; by INSR" evidence="1">
    <location>
        <position position="563"/>
    </location>
</feature>
<gene>
    <name evidence="3" type="primary">irs1</name>
</gene>
<evidence type="ECO:0000250" key="1"/>
<evidence type="ECO:0000250" key="2">
    <source>
        <dbReference type="UniProtKB" id="P35568"/>
    </source>
</evidence>
<evidence type="ECO:0000250" key="3">
    <source>
        <dbReference type="UniProtKB" id="P35570"/>
    </source>
</evidence>
<evidence type="ECO:0000250" key="4">
    <source>
        <dbReference type="UniProtKB" id="Q91615"/>
    </source>
</evidence>
<evidence type="ECO:0000255" key="5"/>
<evidence type="ECO:0000255" key="6">
    <source>
        <dbReference type="PROSITE-ProRule" id="PRU00145"/>
    </source>
</evidence>
<evidence type="ECO:0000255" key="7">
    <source>
        <dbReference type="PROSITE-ProRule" id="PRU00389"/>
    </source>
</evidence>
<evidence type="ECO:0000256" key="8">
    <source>
        <dbReference type="SAM" id="MobiDB-lite"/>
    </source>
</evidence>
<evidence type="ECO:0000305" key="9"/>
<evidence type="ECO:0000312" key="10">
    <source>
        <dbReference type="EMBL" id="AAH63198.1"/>
    </source>
</evidence>
<protein>
    <recommendedName>
        <fullName>Insulin receptor substrate 1</fullName>
        <shortName>IRS-1</shortName>
    </recommendedName>
</protein>
<name>IRS1_XENTR</name>
<keyword id="KW-0597">Phosphoprotein</keyword>
<keyword id="KW-1185">Reference proteome</keyword>
<keyword id="KW-0677">Repeat</keyword>
<keyword id="KW-0807">Transducer</keyword>
<accession>Q6P4Y6</accession>
<sequence length="654" mass="71920">MEDIKKCGYLRKQKSMRKRYFVLRCPGTRGPARLEYYENEKKFRVAEGSGGPRGVLNLEEAFGVNKRSDAKKRHLLVIYTRDGGLGVSADGEEEQDEWYQAILEVQAQARALSSSPDAPAWPGPAFREVWQVSVRPRGLGQTRNLSGIYRLCLAERTLGLLRLRSENPSVTLQLMNVRRCGHSDNYFFVEVGRSAVTGPGELWMQVEDSVVAQNMHETILEAMKSLSEEFRPRTKSQSLSSTPISVPSRRHHPNPPPPSQVGISRRSRAETPIENSPVPKPHSLSKDYSVQSPEEEEEEKGARVETNESSADYGSASSDEYGSSPGVLEAPVFLPPSPGPRETNYISMALYGRRSLVMEPISTNANVPAEEGSRLTLFQEEDNYAMMGQREPRQETGYMPMLPGSNRSQDYMPMTPTSISPPAPVEMAGYVMMSPLGSCSPEIERLSWPPSQEVSAGSSDSHASDYMNMWSLSRSASSTPPPQEAFLSSPGGPCRVPASYRSLPRSYKMEPQPSARASCSSSSDSLEEVNAGKNRRPLSISIDSWNTGTLSGNYRRPPSPGEYVSIHFRAPPEEDLREGSHRCPKRVRFHGGAALGDAQRGLHGNGLCASQNFTTSCKNERGTGNERGKCLQTCGEITAGLGEDFLGEGLLGCR</sequence>
<dbReference type="EMBL" id="BC063198">
    <property type="protein sequence ID" value="AAH63198.1"/>
    <property type="molecule type" value="mRNA"/>
</dbReference>
<dbReference type="SMR" id="Q6P4Y6"/>
<dbReference type="STRING" id="8364.ENSXETP00000034741"/>
<dbReference type="PaxDb" id="8364-ENSXETP00000057258"/>
<dbReference type="eggNOG" id="ENOG502QUNU">
    <property type="taxonomic scope" value="Eukaryota"/>
</dbReference>
<dbReference type="InParanoid" id="Q6P4Y6"/>
<dbReference type="Proteomes" id="UP000008143">
    <property type="component" value="Unplaced"/>
</dbReference>
<dbReference type="GO" id="GO:0005737">
    <property type="term" value="C:cytoplasm"/>
    <property type="evidence" value="ECO:0000250"/>
    <property type="project" value="UniProtKB"/>
</dbReference>
<dbReference type="GO" id="GO:0043231">
    <property type="term" value="C:intracellular membrane-bounded organelle"/>
    <property type="evidence" value="ECO:0000250"/>
    <property type="project" value="UniProtKB"/>
</dbReference>
<dbReference type="GO" id="GO:0005634">
    <property type="term" value="C:nucleus"/>
    <property type="evidence" value="ECO:0000250"/>
    <property type="project" value="UniProtKB"/>
</dbReference>
<dbReference type="GO" id="GO:0005158">
    <property type="term" value="F:insulin receptor binding"/>
    <property type="evidence" value="ECO:0000250"/>
    <property type="project" value="UniProtKB"/>
</dbReference>
<dbReference type="GO" id="GO:0005159">
    <property type="term" value="F:insulin-like growth factor receptor binding"/>
    <property type="evidence" value="ECO:0000250"/>
    <property type="project" value="UniProtKB"/>
</dbReference>
<dbReference type="GO" id="GO:0043548">
    <property type="term" value="F:phosphatidylinositol 3-kinase binding"/>
    <property type="evidence" value="ECO:0000250"/>
    <property type="project" value="UniProtKB"/>
</dbReference>
<dbReference type="GO" id="GO:0042169">
    <property type="term" value="F:SH2 domain binding"/>
    <property type="evidence" value="ECO:0000250"/>
    <property type="project" value="UniProtKB"/>
</dbReference>
<dbReference type="GO" id="GO:0008286">
    <property type="term" value="P:insulin receptor signaling pathway"/>
    <property type="evidence" value="ECO:0007669"/>
    <property type="project" value="InterPro"/>
</dbReference>
<dbReference type="GO" id="GO:0048009">
    <property type="term" value="P:insulin-like growth factor receptor signaling pathway"/>
    <property type="evidence" value="ECO:0000250"/>
    <property type="project" value="UniProtKB"/>
</dbReference>
<dbReference type="CDD" id="cd01257">
    <property type="entry name" value="PH_IRS"/>
    <property type="match status" value="1"/>
</dbReference>
<dbReference type="CDD" id="cd01204">
    <property type="entry name" value="PTB_IRS"/>
    <property type="match status" value="1"/>
</dbReference>
<dbReference type="FunFam" id="2.30.29.30:FF:000029">
    <property type="entry name" value="Insulin receptor substrate 1"/>
    <property type="match status" value="1"/>
</dbReference>
<dbReference type="Gene3D" id="2.30.29.30">
    <property type="entry name" value="Pleckstrin-homology domain (PH domain)/Phosphotyrosine-binding domain (PTB)"/>
    <property type="match status" value="2"/>
</dbReference>
<dbReference type="InterPro" id="IPR039011">
    <property type="entry name" value="IRS"/>
</dbReference>
<dbReference type="InterPro" id="IPR002404">
    <property type="entry name" value="IRS_PTB"/>
</dbReference>
<dbReference type="InterPro" id="IPR011993">
    <property type="entry name" value="PH-like_dom_sf"/>
</dbReference>
<dbReference type="InterPro" id="IPR001849">
    <property type="entry name" value="PH_domain"/>
</dbReference>
<dbReference type="PANTHER" id="PTHR10614">
    <property type="entry name" value="INSULIN RECEPTOR SUBSTRATE"/>
    <property type="match status" value="1"/>
</dbReference>
<dbReference type="PANTHER" id="PTHR10614:SF14">
    <property type="entry name" value="INSULIN RECEPTOR SUBSTRATE 1"/>
    <property type="match status" value="1"/>
</dbReference>
<dbReference type="Pfam" id="PF02174">
    <property type="entry name" value="IRS"/>
    <property type="match status" value="1"/>
</dbReference>
<dbReference type="Pfam" id="PF00169">
    <property type="entry name" value="PH"/>
    <property type="match status" value="1"/>
</dbReference>
<dbReference type="PRINTS" id="PR00628">
    <property type="entry name" value="INSULINRSI"/>
</dbReference>
<dbReference type="SMART" id="SM01244">
    <property type="entry name" value="IRS"/>
    <property type="match status" value="1"/>
</dbReference>
<dbReference type="SMART" id="SM00233">
    <property type="entry name" value="PH"/>
    <property type="match status" value="1"/>
</dbReference>
<dbReference type="SMART" id="SM00310">
    <property type="entry name" value="PTBI"/>
    <property type="match status" value="1"/>
</dbReference>
<dbReference type="SUPFAM" id="SSF50729">
    <property type="entry name" value="PH domain-like"/>
    <property type="match status" value="2"/>
</dbReference>
<dbReference type="PROSITE" id="PS51064">
    <property type="entry name" value="IRS_PTB"/>
    <property type="match status" value="1"/>
</dbReference>
<dbReference type="PROSITE" id="PS50003">
    <property type="entry name" value="PH_DOMAIN"/>
    <property type="match status" value="1"/>
</dbReference>
<comment type="function">
    <text evidence="1">May mediate the control of various cellular processes by insulin. When phosphorylated by the insulin receptor binds specifically to various cellular proteins containing SH2 domains such as phosphatidylinositol 3-kinase p85 subunit or grb2. Activates phosphatidylinositol 3-kinase when bound to the regulatory p85 subunit (By similarity).</text>
</comment>
<comment type="subunit">
    <text evidence="2 4">Interacts with the NPXY motif of tyrosine-phosphorylated igf1r and insr via the PTB domain. Binds to phosphatidylinositol 3-kinase p85 subunit via the phosphorylated YXXM motifs (By similarity).</text>
</comment>